<comment type="function">
    <text evidence="1">Activates ribosomal RNA transcription. Plays a direct role in upstream activation of rRNA promoters.</text>
</comment>
<comment type="subunit">
    <text evidence="1">Homodimer.</text>
</comment>
<comment type="similarity">
    <text evidence="1">Belongs to the transcriptional regulatory Fis family.</text>
</comment>
<accession>B5XND7</accession>
<dbReference type="EMBL" id="CP000964">
    <property type="protein sequence ID" value="ACI06859.1"/>
    <property type="molecule type" value="Genomic_DNA"/>
</dbReference>
<dbReference type="SMR" id="B5XND7"/>
<dbReference type="KEGG" id="kpe:KPK_0447"/>
<dbReference type="HOGENOM" id="CLU_158040_3_0_6"/>
<dbReference type="Proteomes" id="UP000001734">
    <property type="component" value="Chromosome"/>
</dbReference>
<dbReference type="GO" id="GO:0003700">
    <property type="term" value="F:DNA-binding transcription factor activity"/>
    <property type="evidence" value="ECO:0007669"/>
    <property type="project" value="UniProtKB-UniRule"/>
</dbReference>
<dbReference type="GO" id="GO:0043565">
    <property type="term" value="F:sequence-specific DNA binding"/>
    <property type="evidence" value="ECO:0007669"/>
    <property type="project" value="InterPro"/>
</dbReference>
<dbReference type="FunFam" id="1.10.10.60:FF:000006">
    <property type="entry name" value="DNA-binding protein Fis"/>
    <property type="match status" value="1"/>
</dbReference>
<dbReference type="Gene3D" id="1.10.10.60">
    <property type="entry name" value="Homeodomain-like"/>
    <property type="match status" value="1"/>
</dbReference>
<dbReference type="HAMAP" id="MF_00166">
    <property type="entry name" value="DNA_binding_Fis"/>
    <property type="match status" value="1"/>
</dbReference>
<dbReference type="InterPro" id="IPR005412">
    <property type="entry name" value="Fis_DNA-bd"/>
</dbReference>
<dbReference type="InterPro" id="IPR009057">
    <property type="entry name" value="Homeodomain-like_sf"/>
</dbReference>
<dbReference type="InterPro" id="IPR002197">
    <property type="entry name" value="HTH_Fis"/>
</dbReference>
<dbReference type="InterPro" id="IPR050207">
    <property type="entry name" value="Trans_regulatory_Fis"/>
</dbReference>
<dbReference type="NCBIfam" id="NF001659">
    <property type="entry name" value="PRK00430.1"/>
    <property type="match status" value="1"/>
</dbReference>
<dbReference type="PANTHER" id="PTHR47918">
    <property type="entry name" value="DNA-BINDING PROTEIN FIS"/>
    <property type="match status" value="1"/>
</dbReference>
<dbReference type="PANTHER" id="PTHR47918:SF1">
    <property type="entry name" value="DNA-BINDING PROTEIN FIS"/>
    <property type="match status" value="1"/>
</dbReference>
<dbReference type="Pfam" id="PF02954">
    <property type="entry name" value="HTH_8"/>
    <property type="match status" value="1"/>
</dbReference>
<dbReference type="PIRSF" id="PIRSF002097">
    <property type="entry name" value="DNA-binding_Fis"/>
    <property type="match status" value="1"/>
</dbReference>
<dbReference type="PRINTS" id="PR01591">
    <property type="entry name" value="DNABINDNGFIS"/>
</dbReference>
<dbReference type="PRINTS" id="PR01590">
    <property type="entry name" value="HTHFIS"/>
</dbReference>
<dbReference type="SUPFAM" id="SSF46689">
    <property type="entry name" value="Homeodomain-like"/>
    <property type="match status" value="1"/>
</dbReference>
<evidence type="ECO:0000255" key="1">
    <source>
        <dbReference type="HAMAP-Rule" id="MF_00166"/>
    </source>
</evidence>
<sequence>MFEQRVNSDVLTVSTVNSQDQVTQKPLRDSVKQALKNYFAQLNGQDVNDLYELVLAEVEQPLLDMVMQYTRGNQTRAALMMGINRGTLRKKLKKYGMN</sequence>
<keyword id="KW-0010">Activator</keyword>
<keyword id="KW-0238">DNA-binding</keyword>
<keyword id="KW-0804">Transcription</keyword>
<keyword id="KW-0805">Transcription regulation</keyword>
<name>FIS_KLEP3</name>
<proteinExistence type="inferred from homology"/>
<protein>
    <recommendedName>
        <fullName evidence="1">DNA-binding protein Fis</fullName>
    </recommendedName>
</protein>
<organism>
    <name type="scientific">Klebsiella pneumoniae (strain 342)</name>
    <dbReference type="NCBI Taxonomy" id="507522"/>
    <lineage>
        <taxon>Bacteria</taxon>
        <taxon>Pseudomonadati</taxon>
        <taxon>Pseudomonadota</taxon>
        <taxon>Gammaproteobacteria</taxon>
        <taxon>Enterobacterales</taxon>
        <taxon>Enterobacteriaceae</taxon>
        <taxon>Klebsiella/Raoultella group</taxon>
        <taxon>Klebsiella</taxon>
        <taxon>Klebsiella pneumoniae complex</taxon>
    </lineage>
</organism>
<reference key="1">
    <citation type="journal article" date="2008" name="PLoS Genet.">
        <title>Complete genome sequence of the N2-fixing broad host range endophyte Klebsiella pneumoniae 342 and virulence predictions verified in mice.</title>
        <authorList>
            <person name="Fouts D.E."/>
            <person name="Tyler H.L."/>
            <person name="DeBoy R.T."/>
            <person name="Daugherty S."/>
            <person name="Ren Q."/>
            <person name="Badger J.H."/>
            <person name="Durkin A.S."/>
            <person name="Huot H."/>
            <person name="Shrivastava S."/>
            <person name="Kothari S."/>
            <person name="Dodson R.J."/>
            <person name="Mohamoud Y."/>
            <person name="Khouri H."/>
            <person name="Roesch L.F.W."/>
            <person name="Krogfelt K.A."/>
            <person name="Struve C."/>
            <person name="Triplett E.W."/>
            <person name="Methe B.A."/>
        </authorList>
    </citation>
    <scope>NUCLEOTIDE SEQUENCE [LARGE SCALE GENOMIC DNA]</scope>
    <source>
        <strain>342</strain>
    </source>
</reference>
<gene>
    <name evidence="1" type="primary">fis</name>
    <name type="ordered locus">KPK_0447</name>
</gene>
<feature type="chain" id="PRO_1000097455" description="DNA-binding protein Fis">
    <location>
        <begin position="1"/>
        <end position="98"/>
    </location>
</feature>
<feature type="DNA-binding region" description="H-T-H motif" evidence="1">
    <location>
        <begin position="74"/>
        <end position="93"/>
    </location>
</feature>